<geneLocation type="chloroplast"/>
<reference key="1">
    <citation type="journal article" date="2004" name="Mol. Biol. Evol.">
        <title>Chloroplast phylogeny indicates that bryophytes are monophyletic.</title>
        <authorList>
            <person name="Nishiyama T."/>
            <person name="Wolf P.G."/>
            <person name="Kugita M."/>
            <person name="Sinclair R.B."/>
            <person name="Sugita M."/>
            <person name="Sugiura C."/>
            <person name="Wakasugi T."/>
            <person name="Yamada K."/>
            <person name="Yoshinaga K."/>
            <person name="Yamaguchi K."/>
            <person name="Ueda K."/>
            <person name="Hasebe M."/>
        </authorList>
    </citation>
    <scope>NUCLEOTIDE SEQUENCE [LARGE SCALE GENOMIC DNA]</scope>
    <source>
        <strain>Kingyoku</strain>
    </source>
</reference>
<proteinExistence type="inferred from homology"/>
<keyword id="KW-0150">Chloroplast</keyword>
<keyword id="KW-0934">Plastid</keyword>
<keyword id="KW-0687">Ribonucleoprotein</keyword>
<keyword id="KW-0689">Ribosomal protein</keyword>
<keyword id="KW-0694">RNA-binding</keyword>
<keyword id="KW-0699">rRNA-binding</keyword>
<feature type="chain" id="PRO_0000126592" description="Small ribosomal subunit protein uS8c">
    <location>
        <begin position="1"/>
        <end position="132"/>
    </location>
</feature>
<protein>
    <recommendedName>
        <fullName evidence="2">Small ribosomal subunit protein uS8c</fullName>
    </recommendedName>
    <alternativeName>
        <fullName>30S ribosomal protein S8, chloroplastic</fullName>
    </alternativeName>
</protein>
<accession>Q8WHY7</accession>
<sequence length="132" mass="15150">MSHDTIADMISLVRNANMRKAVKVRVPATGITQNIVKILLQEGFIKDYMKQEKRTRSFFILTLKYQGRVRKPHITAFKRISKPSLRIYSNYQKITRILGGMGIAIISTSSGIMTDREARQKRLGGEIICHVW</sequence>
<gene>
    <name type="primary">rps8</name>
</gene>
<comment type="function">
    <text evidence="1">One of the primary rRNA binding proteins, it binds directly to 16S rRNA central domain where it helps coordinate assembly of the platform of the 30S subunit.</text>
</comment>
<comment type="subunit">
    <text evidence="1">Part of the 30S ribosomal subunit.</text>
</comment>
<comment type="subcellular location">
    <subcellularLocation>
        <location>Plastid</location>
        <location>Chloroplast</location>
    </subcellularLocation>
</comment>
<comment type="similarity">
    <text evidence="2">Belongs to the universal ribosomal protein uS8 family.</text>
</comment>
<evidence type="ECO:0000250" key="1"/>
<evidence type="ECO:0000305" key="2"/>
<organism>
    <name type="scientific">Psilotum nudum</name>
    <name type="common">Whisk fern</name>
    <name type="synonym">Lycopodium nudum</name>
    <dbReference type="NCBI Taxonomy" id="3240"/>
    <lineage>
        <taxon>Eukaryota</taxon>
        <taxon>Viridiplantae</taxon>
        <taxon>Streptophyta</taxon>
        <taxon>Embryophyta</taxon>
        <taxon>Tracheophyta</taxon>
        <taxon>Polypodiopsida</taxon>
        <taxon>Ophioglossidae</taxon>
        <taxon>Psilotales</taxon>
        <taxon>Psilotaceae</taxon>
        <taxon>Psilotum</taxon>
    </lineage>
</organism>
<dbReference type="EMBL" id="AP004638">
    <property type="protein sequence ID" value="BAB84252.1"/>
    <property type="molecule type" value="Genomic_DNA"/>
</dbReference>
<dbReference type="RefSeq" id="NP_569664.1">
    <property type="nucleotide sequence ID" value="NC_003386.1"/>
</dbReference>
<dbReference type="SMR" id="Q8WHY7"/>
<dbReference type="GeneID" id="2545180"/>
<dbReference type="GO" id="GO:0009507">
    <property type="term" value="C:chloroplast"/>
    <property type="evidence" value="ECO:0007669"/>
    <property type="project" value="UniProtKB-SubCell"/>
</dbReference>
<dbReference type="GO" id="GO:1990904">
    <property type="term" value="C:ribonucleoprotein complex"/>
    <property type="evidence" value="ECO:0007669"/>
    <property type="project" value="UniProtKB-KW"/>
</dbReference>
<dbReference type="GO" id="GO:0005840">
    <property type="term" value="C:ribosome"/>
    <property type="evidence" value="ECO:0007669"/>
    <property type="project" value="UniProtKB-KW"/>
</dbReference>
<dbReference type="GO" id="GO:0019843">
    <property type="term" value="F:rRNA binding"/>
    <property type="evidence" value="ECO:0007669"/>
    <property type="project" value="UniProtKB-UniRule"/>
</dbReference>
<dbReference type="GO" id="GO:0003735">
    <property type="term" value="F:structural constituent of ribosome"/>
    <property type="evidence" value="ECO:0007669"/>
    <property type="project" value="InterPro"/>
</dbReference>
<dbReference type="GO" id="GO:0006412">
    <property type="term" value="P:translation"/>
    <property type="evidence" value="ECO:0007669"/>
    <property type="project" value="UniProtKB-UniRule"/>
</dbReference>
<dbReference type="FunFam" id="3.30.1490.10:FF:000001">
    <property type="entry name" value="30S ribosomal protein S8"/>
    <property type="match status" value="1"/>
</dbReference>
<dbReference type="Gene3D" id="3.30.1370.30">
    <property type="match status" value="1"/>
</dbReference>
<dbReference type="Gene3D" id="3.30.1490.10">
    <property type="match status" value="1"/>
</dbReference>
<dbReference type="HAMAP" id="MF_01302_B">
    <property type="entry name" value="Ribosomal_uS8_B"/>
    <property type="match status" value="1"/>
</dbReference>
<dbReference type="InterPro" id="IPR000630">
    <property type="entry name" value="Ribosomal_uS8"/>
</dbReference>
<dbReference type="InterPro" id="IPR047863">
    <property type="entry name" value="Ribosomal_uS8_CS"/>
</dbReference>
<dbReference type="InterPro" id="IPR035987">
    <property type="entry name" value="Ribosomal_uS8_sf"/>
</dbReference>
<dbReference type="NCBIfam" id="NF001109">
    <property type="entry name" value="PRK00136.1"/>
    <property type="match status" value="1"/>
</dbReference>
<dbReference type="PANTHER" id="PTHR11758">
    <property type="entry name" value="40S RIBOSOMAL PROTEIN S15A"/>
    <property type="match status" value="1"/>
</dbReference>
<dbReference type="Pfam" id="PF00410">
    <property type="entry name" value="Ribosomal_S8"/>
    <property type="match status" value="1"/>
</dbReference>
<dbReference type="SUPFAM" id="SSF56047">
    <property type="entry name" value="Ribosomal protein S8"/>
    <property type="match status" value="1"/>
</dbReference>
<dbReference type="PROSITE" id="PS00053">
    <property type="entry name" value="RIBOSOMAL_S8"/>
    <property type="match status" value="1"/>
</dbReference>
<name>RR8_PSINU</name>